<reference key="1">
    <citation type="journal article" date="2006" name="PLoS Biol.">
        <title>The genome of deep-sea vent chemolithoautotroph Thiomicrospira crunogena XCL-2.</title>
        <authorList>
            <person name="Scott K.M."/>
            <person name="Sievert S.M."/>
            <person name="Abril F.N."/>
            <person name="Ball L.A."/>
            <person name="Barrett C.J."/>
            <person name="Blake R.A."/>
            <person name="Boller A.J."/>
            <person name="Chain P.S.G."/>
            <person name="Clark J.A."/>
            <person name="Davis C.R."/>
            <person name="Detter C."/>
            <person name="Do K.F."/>
            <person name="Dobrinski K.P."/>
            <person name="Faza B.I."/>
            <person name="Fitzpatrick K.A."/>
            <person name="Freyermuth S.K."/>
            <person name="Harmer T.L."/>
            <person name="Hauser L.J."/>
            <person name="Huegler M."/>
            <person name="Kerfeld C.A."/>
            <person name="Klotz M.G."/>
            <person name="Kong W.W."/>
            <person name="Land M."/>
            <person name="Lapidus A."/>
            <person name="Larimer F.W."/>
            <person name="Longo D.L."/>
            <person name="Lucas S."/>
            <person name="Malfatti S.A."/>
            <person name="Massey S.E."/>
            <person name="Martin D.D."/>
            <person name="McCuddin Z."/>
            <person name="Meyer F."/>
            <person name="Moore J.L."/>
            <person name="Ocampo L.H. Jr."/>
            <person name="Paul J.H."/>
            <person name="Paulsen I.T."/>
            <person name="Reep D.K."/>
            <person name="Ren Q."/>
            <person name="Ross R.L."/>
            <person name="Sato P.Y."/>
            <person name="Thomas P."/>
            <person name="Tinkham L.E."/>
            <person name="Zeruth G.T."/>
        </authorList>
    </citation>
    <scope>NUCLEOTIDE SEQUENCE [LARGE SCALE GENOMIC DNA]</scope>
    <source>
        <strain>DSM 25203 / XCL-2</strain>
    </source>
</reference>
<dbReference type="EC" id="2.7.4.8" evidence="1"/>
<dbReference type="EMBL" id="CP000109">
    <property type="protein sequence ID" value="ABB42726.1"/>
    <property type="molecule type" value="Genomic_DNA"/>
</dbReference>
<dbReference type="SMR" id="Q31DP7"/>
<dbReference type="STRING" id="317025.Tcr_2138"/>
<dbReference type="KEGG" id="tcx:Tcr_2138"/>
<dbReference type="eggNOG" id="COG0194">
    <property type="taxonomic scope" value="Bacteria"/>
</dbReference>
<dbReference type="HOGENOM" id="CLU_001715_1_0_6"/>
<dbReference type="OrthoDB" id="9808150at2"/>
<dbReference type="GO" id="GO:0005829">
    <property type="term" value="C:cytosol"/>
    <property type="evidence" value="ECO:0007669"/>
    <property type="project" value="TreeGrafter"/>
</dbReference>
<dbReference type="GO" id="GO:0005524">
    <property type="term" value="F:ATP binding"/>
    <property type="evidence" value="ECO:0007669"/>
    <property type="project" value="UniProtKB-UniRule"/>
</dbReference>
<dbReference type="GO" id="GO:0004385">
    <property type="term" value="F:guanylate kinase activity"/>
    <property type="evidence" value="ECO:0007669"/>
    <property type="project" value="UniProtKB-UniRule"/>
</dbReference>
<dbReference type="CDD" id="cd00071">
    <property type="entry name" value="GMPK"/>
    <property type="match status" value="1"/>
</dbReference>
<dbReference type="FunFam" id="3.30.63.10:FF:000005">
    <property type="entry name" value="Guanylate kinase"/>
    <property type="match status" value="1"/>
</dbReference>
<dbReference type="FunFam" id="3.40.50.300:FF:000084">
    <property type="entry name" value="Guanylate kinase"/>
    <property type="match status" value="1"/>
</dbReference>
<dbReference type="Gene3D" id="3.30.63.10">
    <property type="entry name" value="Guanylate Kinase phosphate binding domain"/>
    <property type="match status" value="1"/>
</dbReference>
<dbReference type="Gene3D" id="3.40.50.300">
    <property type="entry name" value="P-loop containing nucleotide triphosphate hydrolases"/>
    <property type="match status" value="1"/>
</dbReference>
<dbReference type="HAMAP" id="MF_00328">
    <property type="entry name" value="Guanylate_kinase"/>
    <property type="match status" value="1"/>
</dbReference>
<dbReference type="InterPro" id="IPR008145">
    <property type="entry name" value="GK/Ca_channel_bsu"/>
</dbReference>
<dbReference type="InterPro" id="IPR008144">
    <property type="entry name" value="Guanylate_kin-like_dom"/>
</dbReference>
<dbReference type="InterPro" id="IPR017665">
    <property type="entry name" value="Guanylate_kinase"/>
</dbReference>
<dbReference type="InterPro" id="IPR020590">
    <property type="entry name" value="Guanylate_kinase_CS"/>
</dbReference>
<dbReference type="InterPro" id="IPR027417">
    <property type="entry name" value="P-loop_NTPase"/>
</dbReference>
<dbReference type="NCBIfam" id="TIGR03263">
    <property type="entry name" value="guanyl_kin"/>
    <property type="match status" value="1"/>
</dbReference>
<dbReference type="PANTHER" id="PTHR23117:SF13">
    <property type="entry name" value="GUANYLATE KINASE"/>
    <property type="match status" value="1"/>
</dbReference>
<dbReference type="PANTHER" id="PTHR23117">
    <property type="entry name" value="GUANYLATE KINASE-RELATED"/>
    <property type="match status" value="1"/>
</dbReference>
<dbReference type="Pfam" id="PF00625">
    <property type="entry name" value="Guanylate_kin"/>
    <property type="match status" value="1"/>
</dbReference>
<dbReference type="SMART" id="SM00072">
    <property type="entry name" value="GuKc"/>
    <property type="match status" value="1"/>
</dbReference>
<dbReference type="SUPFAM" id="SSF52540">
    <property type="entry name" value="P-loop containing nucleoside triphosphate hydrolases"/>
    <property type="match status" value="1"/>
</dbReference>
<dbReference type="PROSITE" id="PS00856">
    <property type="entry name" value="GUANYLATE_KINASE_1"/>
    <property type="match status" value="1"/>
</dbReference>
<dbReference type="PROSITE" id="PS50052">
    <property type="entry name" value="GUANYLATE_KINASE_2"/>
    <property type="match status" value="1"/>
</dbReference>
<proteinExistence type="inferred from homology"/>
<feature type="chain" id="PRO_0000266430" description="Guanylate kinase">
    <location>
        <begin position="1"/>
        <end position="205"/>
    </location>
</feature>
<feature type="domain" description="Guanylate kinase-like" evidence="1">
    <location>
        <begin position="3"/>
        <end position="181"/>
    </location>
</feature>
<feature type="binding site" evidence="1">
    <location>
        <begin position="10"/>
        <end position="17"/>
    </location>
    <ligand>
        <name>ATP</name>
        <dbReference type="ChEBI" id="CHEBI:30616"/>
    </ligand>
</feature>
<organism>
    <name type="scientific">Hydrogenovibrio crunogenus (strain DSM 25203 / XCL-2)</name>
    <name type="common">Thiomicrospira crunogena</name>
    <dbReference type="NCBI Taxonomy" id="317025"/>
    <lineage>
        <taxon>Bacteria</taxon>
        <taxon>Pseudomonadati</taxon>
        <taxon>Pseudomonadota</taxon>
        <taxon>Gammaproteobacteria</taxon>
        <taxon>Thiotrichales</taxon>
        <taxon>Piscirickettsiaceae</taxon>
        <taxon>Hydrogenovibrio</taxon>
    </lineage>
</organism>
<keyword id="KW-0067">ATP-binding</keyword>
<keyword id="KW-0963">Cytoplasm</keyword>
<keyword id="KW-0418">Kinase</keyword>
<keyword id="KW-0547">Nucleotide-binding</keyword>
<keyword id="KW-0808">Transferase</keyword>
<gene>
    <name evidence="1" type="primary">gmk</name>
    <name type="ordered locus">Tcr_2138</name>
</gene>
<comment type="function">
    <text evidence="1">Essential for recycling GMP and indirectly, cGMP.</text>
</comment>
<comment type="catalytic activity">
    <reaction evidence="1">
        <text>GMP + ATP = GDP + ADP</text>
        <dbReference type="Rhea" id="RHEA:20780"/>
        <dbReference type="ChEBI" id="CHEBI:30616"/>
        <dbReference type="ChEBI" id="CHEBI:58115"/>
        <dbReference type="ChEBI" id="CHEBI:58189"/>
        <dbReference type="ChEBI" id="CHEBI:456216"/>
        <dbReference type="EC" id="2.7.4.8"/>
    </reaction>
</comment>
<comment type="subcellular location">
    <subcellularLocation>
        <location evidence="1">Cytoplasm</location>
    </subcellularLocation>
</comment>
<comment type="similarity">
    <text evidence="1">Belongs to the guanylate kinase family.</text>
</comment>
<evidence type="ECO:0000255" key="1">
    <source>
        <dbReference type="HAMAP-Rule" id="MF_00328"/>
    </source>
</evidence>
<protein>
    <recommendedName>
        <fullName evidence="1">Guanylate kinase</fullName>
        <ecNumber evidence="1">2.7.4.8</ecNumber>
    </recommendedName>
    <alternativeName>
        <fullName evidence="1">GMP kinase</fullName>
    </alternativeName>
</protein>
<accession>Q31DP7</accession>
<name>KGUA_HYDCU</name>
<sequence length="205" mass="23166">MAGSLYIISAPSGAGKTSLVSKLTEKDSRIQVSISSTTRPKRPGEEDGVNYVFLSVDAFKQKVAENDFLEHAQVFDNYYGTSKSVVESKLAEDKDVILEIDWQGAQQVRKLIPDAVSVFILPPSLKELEKRLRGRGTDSEDVIERRMSDAVNEMKHFNEFDYLVINNHFDTALSELHSIFLANRQACAKQYEKHSVMINELTQQH</sequence>